<evidence type="ECO:0000250" key="1">
    <source>
        <dbReference type="UniProtKB" id="A6NI79"/>
    </source>
</evidence>
<evidence type="ECO:0000255" key="2"/>
<evidence type="ECO:0000256" key="3">
    <source>
        <dbReference type="SAM" id="MobiDB-lite"/>
    </source>
</evidence>
<evidence type="ECO:0000305" key="4"/>
<proteinExistence type="evidence at transcript level"/>
<accession>Q6DCD4</accession>
<gene>
    <name type="primary">ccdc69-a</name>
</gene>
<feature type="initiator methionine" description="Removed" evidence="2">
    <location>
        <position position="1"/>
    </location>
</feature>
<feature type="chain" id="PRO_0000328965" description="Coiled-coil domain-containing protein 69-A">
    <location>
        <begin position="2"/>
        <end position="305"/>
    </location>
</feature>
<feature type="region of interest" description="Disordered" evidence="3">
    <location>
        <begin position="13"/>
        <end position="38"/>
    </location>
</feature>
<feature type="coiled-coil region" evidence="2">
    <location>
        <begin position="42"/>
        <end position="281"/>
    </location>
</feature>
<feature type="compositionally biased region" description="Polar residues" evidence="3">
    <location>
        <begin position="25"/>
        <end position="38"/>
    </location>
</feature>
<feature type="lipid moiety-binding region" description="N-myristoyl glycine" evidence="2">
    <location>
        <position position="2"/>
    </location>
</feature>
<dbReference type="EMBL" id="BC078114">
    <property type="protein sequence ID" value="AAH78114.1"/>
    <property type="molecule type" value="mRNA"/>
</dbReference>
<dbReference type="RefSeq" id="NP_001087169.1">
    <property type="nucleotide sequence ID" value="NM_001093700.1"/>
</dbReference>
<dbReference type="SMR" id="Q6DCD4"/>
<dbReference type="DNASU" id="447058"/>
<dbReference type="AGR" id="Xenbase:XB-GENE-999153"/>
<dbReference type="Proteomes" id="UP000186698">
    <property type="component" value="Unplaced"/>
</dbReference>
<dbReference type="Bgee" id="447058">
    <property type="expression patterns" value="Expressed in heart and 18 other cell types or tissues"/>
</dbReference>
<dbReference type="GO" id="GO:0005737">
    <property type="term" value="C:cytoplasm"/>
    <property type="evidence" value="ECO:0007669"/>
    <property type="project" value="UniProtKB-KW"/>
</dbReference>
<dbReference type="GO" id="GO:0030496">
    <property type="term" value="C:midbody"/>
    <property type="evidence" value="ECO:0007669"/>
    <property type="project" value="UniProtKB-SubCell"/>
</dbReference>
<dbReference type="GO" id="GO:0005634">
    <property type="term" value="C:nucleus"/>
    <property type="evidence" value="ECO:0000318"/>
    <property type="project" value="GO_Central"/>
</dbReference>
<dbReference type="GO" id="GO:0051233">
    <property type="term" value="C:spindle midzone"/>
    <property type="evidence" value="ECO:0000250"/>
    <property type="project" value="UniProtKB"/>
</dbReference>
<dbReference type="GO" id="GO:0008017">
    <property type="term" value="F:microtubule binding"/>
    <property type="evidence" value="ECO:0000318"/>
    <property type="project" value="GO_Central"/>
</dbReference>
<dbReference type="GO" id="GO:0051255">
    <property type="term" value="P:spindle midzone assembly"/>
    <property type="evidence" value="ECO:0000250"/>
    <property type="project" value="UniProtKB"/>
</dbReference>
<dbReference type="InterPro" id="IPR051293">
    <property type="entry name" value="MTUS1/CCDC69"/>
</dbReference>
<dbReference type="PANTHER" id="PTHR24200:SF6">
    <property type="entry name" value="COILED-COIL DOMAIN-CONTAINING PROTEIN 69"/>
    <property type="match status" value="1"/>
</dbReference>
<dbReference type="PANTHER" id="PTHR24200">
    <property type="entry name" value="TOUCAN, ISOFORM A"/>
    <property type="match status" value="1"/>
</dbReference>
<sequence length="305" mass="35506">MGCKTSKMCCPQLRKKKRQKAHQGGLTSQELNDLNAKTQGPNEVLQKIKEYEQEIRDLLQKHQEEKTALADAHKADVEARTLELQAQAQKDRDAETAKLLSEQAATMKAEMEEKFAELQKSFEQEKVSLTQTHQQFTDALQETVDELNSQLASFREKMKRVEESVLRQDYRRHIQDHGSPGQFWEQELQSLHFVIEMKSELIREQDKRLRNHESTMERNLVLEERSRTLQQENEALKVQTQKQGAVTVRLSEELLSTQVSLEKQIHRCEQLQREKEQNLYRAVNGDAPQQFSLQSNAQELPVMVL</sequence>
<reference key="1">
    <citation type="submission" date="2004-07" db="EMBL/GenBank/DDBJ databases">
        <authorList>
            <consortium name="NIH - Xenopus Gene Collection (XGC) project"/>
        </authorList>
    </citation>
    <scope>NUCLEOTIDE SEQUENCE [LARGE SCALE MRNA]</scope>
    <source>
        <tissue>Oocyte</tissue>
    </source>
</reference>
<comment type="function">
    <text evidence="1">May act as a scaffold to regulate the recruitment and assembly of spindle midzone components.</text>
</comment>
<comment type="subcellular location">
    <subcellularLocation>
        <location evidence="1">Cytoplasm</location>
        <location evidence="1">Cytoskeleton</location>
        <location evidence="1">Spindle</location>
    </subcellularLocation>
    <subcellularLocation>
        <location evidence="1">Midbody</location>
    </subcellularLocation>
    <text evidence="1">During early anaphase, localizes along overlapping interpolar microtubules between the separating chromosomes. During late anaphase, localizes to the center of spindle midzone. Concentrated at the midbody during telophase.</text>
</comment>
<comment type="similarity">
    <text evidence="4">Belongs to the CCDC69 family.</text>
</comment>
<name>CC69A_XENLA</name>
<protein>
    <recommendedName>
        <fullName>Coiled-coil domain-containing protein 69-A</fullName>
    </recommendedName>
</protein>
<organism>
    <name type="scientific">Xenopus laevis</name>
    <name type="common">African clawed frog</name>
    <dbReference type="NCBI Taxonomy" id="8355"/>
    <lineage>
        <taxon>Eukaryota</taxon>
        <taxon>Metazoa</taxon>
        <taxon>Chordata</taxon>
        <taxon>Craniata</taxon>
        <taxon>Vertebrata</taxon>
        <taxon>Euteleostomi</taxon>
        <taxon>Amphibia</taxon>
        <taxon>Batrachia</taxon>
        <taxon>Anura</taxon>
        <taxon>Pipoidea</taxon>
        <taxon>Pipidae</taxon>
        <taxon>Xenopodinae</taxon>
        <taxon>Xenopus</taxon>
        <taxon>Xenopus</taxon>
    </lineage>
</organism>
<keyword id="KW-0175">Coiled coil</keyword>
<keyword id="KW-0963">Cytoplasm</keyword>
<keyword id="KW-0206">Cytoskeleton</keyword>
<keyword id="KW-0449">Lipoprotein</keyword>
<keyword id="KW-0519">Myristate</keyword>
<keyword id="KW-1185">Reference proteome</keyword>